<keyword id="KW-0028">Amino-acid biosynthesis</keyword>
<keyword id="KW-0057">Aromatic amino acid biosynthesis</keyword>
<keyword id="KW-0456">Lyase</keyword>
<keyword id="KW-0822">Tryptophan biosynthesis</keyword>
<sequence length="257" mass="28197">MNRIETAFKNTKPFIGYLTGGDGGFDYSVACAHALIRGGVDILEIGFPFSDPVADGPIIQKAHTRALEEKTDSTTILEIAKALRETSNIPLVLFSYYNPLLQKGPQYLHQLKAAGFDAVLIVDLPIPQHANESEPFFQALIEAKLFPIVLATPSTREERLLQIRKLAKGFLYYVSQKGTTGIRSKLSDDFSTQIARLRCYFQIPIVAGFGIANRASAAAALKHADGIVVGSAFVEKLEKKISPEELTTFAQSIDPRQ</sequence>
<organism>
    <name type="scientific">Chlamydia caviae (strain ATCC VR-813 / DSM 19441 / 03DC25 / GPIC)</name>
    <name type="common">Chlamydophila caviae</name>
    <dbReference type="NCBI Taxonomy" id="227941"/>
    <lineage>
        <taxon>Bacteria</taxon>
        <taxon>Pseudomonadati</taxon>
        <taxon>Chlamydiota</taxon>
        <taxon>Chlamydiia</taxon>
        <taxon>Chlamydiales</taxon>
        <taxon>Chlamydiaceae</taxon>
        <taxon>Chlamydia/Chlamydophila group</taxon>
        <taxon>Chlamydia</taxon>
    </lineage>
</organism>
<evidence type="ECO:0000255" key="1">
    <source>
        <dbReference type="HAMAP-Rule" id="MF_00131"/>
    </source>
</evidence>
<name>TRPA_CHLCV</name>
<feature type="chain" id="PRO_0000098766" description="Tryptophan synthase alpha chain">
    <location>
        <begin position="1"/>
        <end position="257"/>
    </location>
</feature>
<feature type="active site" description="Proton acceptor" evidence="1">
    <location>
        <position position="44"/>
    </location>
</feature>
<feature type="active site" description="Proton acceptor" evidence="1">
    <location>
        <position position="55"/>
    </location>
</feature>
<protein>
    <recommendedName>
        <fullName evidence="1">Tryptophan synthase alpha chain</fullName>
        <ecNumber evidence="1">4.2.1.20</ecNumber>
    </recommendedName>
</protein>
<gene>
    <name evidence="1" type="primary">trpA</name>
    <name type="ordered locus">CCA_00567</name>
</gene>
<proteinExistence type="inferred from homology"/>
<comment type="function">
    <text evidence="1">The alpha subunit is responsible for the aldol cleavage of indoleglycerol phosphate to indole and glyceraldehyde 3-phosphate.</text>
</comment>
<comment type="catalytic activity">
    <reaction evidence="1">
        <text>(1S,2R)-1-C-(indol-3-yl)glycerol 3-phosphate + L-serine = D-glyceraldehyde 3-phosphate + L-tryptophan + H2O</text>
        <dbReference type="Rhea" id="RHEA:10532"/>
        <dbReference type="ChEBI" id="CHEBI:15377"/>
        <dbReference type="ChEBI" id="CHEBI:33384"/>
        <dbReference type="ChEBI" id="CHEBI:57912"/>
        <dbReference type="ChEBI" id="CHEBI:58866"/>
        <dbReference type="ChEBI" id="CHEBI:59776"/>
        <dbReference type="EC" id="4.2.1.20"/>
    </reaction>
</comment>
<comment type="pathway">
    <text evidence="1">Amino-acid biosynthesis; L-tryptophan biosynthesis; L-tryptophan from chorismate: step 5/5.</text>
</comment>
<comment type="subunit">
    <text evidence="1">Tetramer of two alpha and two beta chains.</text>
</comment>
<comment type="similarity">
    <text evidence="1">Belongs to the TrpA family.</text>
</comment>
<reference key="1">
    <citation type="journal article" date="2003" name="Nucleic Acids Res.">
        <title>Genome sequence of Chlamydophila caviae (Chlamydia psittaci GPIC): examining the role of niche-specific genes in the evolution of the Chlamydiaceae.</title>
        <authorList>
            <person name="Read T.D."/>
            <person name="Myers G.S.A."/>
            <person name="Brunham R.C."/>
            <person name="Nelson W.C."/>
            <person name="Paulsen I.T."/>
            <person name="Heidelberg J.F."/>
            <person name="Holtzapple E.K."/>
            <person name="Khouri H.M."/>
            <person name="Federova N.B."/>
            <person name="Carty H.A."/>
            <person name="Umayam L.A."/>
            <person name="Haft D.H."/>
            <person name="Peterson J.D."/>
            <person name="Beanan M.J."/>
            <person name="White O."/>
            <person name="Salzberg S.L."/>
            <person name="Hsia R.-C."/>
            <person name="McClarty G."/>
            <person name="Rank R.G."/>
            <person name="Bavoil P.M."/>
            <person name="Fraser C.M."/>
        </authorList>
    </citation>
    <scope>NUCLEOTIDE SEQUENCE [LARGE SCALE GENOMIC DNA]</scope>
    <source>
        <strain>ATCC VR-813 / DSM 19441 / 03DC25 / GPIC</strain>
    </source>
</reference>
<dbReference type="EC" id="4.2.1.20" evidence="1"/>
<dbReference type="EMBL" id="AE015925">
    <property type="protein sequence ID" value="AAP05309.1"/>
    <property type="molecule type" value="Genomic_DNA"/>
</dbReference>
<dbReference type="RefSeq" id="WP_011006524.1">
    <property type="nucleotide sequence ID" value="NC_003361.3"/>
</dbReference>
<dbReference type="SMR" id="Q822W2"/>
<dbReference type="STRING" id="227941.CCA_00567"/>
<dbReference type="KEGG" id="cca:CCA_00567"/>
<dbReference type="eggNOG" id="COG0159">
    <property type="taxonomic scope" value="Bacteria"/>
</dbReference>
<dbReference type="HOGENOM" id="CLU_016734_0_0_0"/>
<dbReference type="OrthoDB" id="9804578at2"/>
<dbReference type="UniPathway" id="UPA00035">
    <property type="reaction ID" value="UER00044"/>
</dbReference>
<dbReference type="Proteomes" id="UP000002193">
    <property type="component" value="Chromosome"/>
</dbReference>
<dbReference type="GO" id="GO:0005829">
    <property type="term" value="C:cytosol"/>
    <property type="evidence" value="ECO:0007669"/>
    <property type="project" value="TreeGrafter"/>
</dbReference>
<dbReference type="GO" id="GO:0004834">
    <property type="term" value="F:tryptophan synthase activity"/>
    <property type="evidence" value="ECO:0007669"/>
    <property type="project" value="UniProtKB-UniRule"/>
</dbReference>
<dbReference type="CDD" id="cd04724">
    <property type="entry name" value="Tryptophan_synthase_alpha"/>
    <property type="match status" value="1"/>
</dbReference>
<dbReference type="Gene3D" id="3.20.20.70">
    <property type="entry name" value="Aldolase class I"/>
    <property type="match status" value="1"/>
</dbReference>
<dbReference type="HAMAP" id="MF_00131">
    <property type="entry name" value="Trp_synth_alpha"/>
    <property type="match status" value="1"/>
</dbReference>
<dbReference type="InterPro" id="IPR013785">
    <property type="entry name" value="Aldolase_TIM"/>
</dbReference>
<dbReference type="InterPro" id="IPR011060">
    <property type="entry name" value="RibuloseP-bd_barrel"/>
</dbReference>
<dbReference type="InterPro" id="IPR018204">
    <property type="entry name" value="Trp_synthase_alpha_AS"/>
</dbReference>
<dbReference type="InterPro" id="IPR002028">
    <property type="entry name" value="Trp_synthase_suA"/>
</dbReference>
<dbReference type="NCBIfam" id="TIGR00262">
    <property type="entry name" value="trpA"/>
    <property type="match status" value="1"/>
</dbReference>
<dbReference type="PANTHER" id="PTHR43406:SF1">
    <property type="entry name" value="TRYPTOPHAN SYNTHASE ALPHA CHAIN, CHLOROPLASTIC"/>
    <property type="match status" value="1"/>
</dbReference>
<dbReference type="PANTHER" id="PTHR43406">
    <property type="entry name" value="TRYPTOPHAN SYNTHASE, ALPHA CHAIN"/>
    <property type="match status" value="1"/>
</dbReference>
<dbReference type="Pfam" id="PF00290">
    <property type="entry name" value="Trp_syntA"/>
    <property type="match status" value="1"/>
</dbReference>
<dbReference type="SUPFAM" id="SSF51366">
    <property type="entry name" value="Ribulose-phoshate binding barrel"/>
    <property type="match status" value="1"/>
</dbReference>
<dbReference type="PROSITE" id="PS00167">
    <property type="entry name" value="TRP_SYNTHASE_ALPHA"/>
    <property type="match status" value="1"/>
</dbReference>
<accession>Q822W2</accession>